<keyword id="KW-1185">Reference proteome</keyword>
<keyword id="KW-0687">Ribonucleoprotein</keyword>
<keyword id="KW-0689">Ribosomal protein</keyword>
<keyword id="KW-0694">RNA-binding</keyword>
<keyword id="KW-0699">rRNA-binding</keyword>
<keyword id="KW-0820">tRNA-binding</keyword>
<protein>
    <recommendedName>
        <fullName evidence="1">Large ribosomal subunit protein uL16</fullName>
    </recommendedName>
    <alternativeName>
        <fullName evidence="3">50S ribosomal protein L16</fullName>
    </alternativeName>
</protein>
<organism>
    <name type="scientific">Nocardioides sp. (strain ATCC BAA-499 / JS614)</name>
    <dbReference type="NCBI Taxonomy" id="196162"/>
    <lineage>
        <taxon>Bacteria</taxon>
        <taxon>Bacillati</taxon>
        <taxon>Actinomycetota</taxon>
        <taxon>Actinomycetes</taxon>
        <taxon>Propionibacteriales</taxon>
        <taxon>Nocardioidaceae</taxon>
        <taxon>Nocardioides</taxon>
    </lineage>
</organism>
<dbReference type="EMBL" id="CP000509">
    <property type="protein sequence ID" value="ABL83396.1"/>
    <property type="molecule type" value="Genomic_DNA"/>
</dbReference>
<dbReference type="RefSeq" id="WP_011757327.1">
    <property type="nucleotide sequence ID" value="NC_008699.1"/>
</dbReference>
<dbReference type="SMR" id="A1SNL1"/>
<dbReference type="STRING" id="196162.Noca_3898"/>
<dbReference type="KEGG" id="nca:Noca_3898"/>
<dbReference type="eggNOG" id="COG0197">
    <property type="taxonomic scope" value="Bacteria"/>
</dbReference>
<dbReference type="HOGENOM" id="CLU_078858_2_1_11"/>
<dbReference type="OrthoDB" id="9802589at2"/>
<dbReference type="Proteomes" id="UP000000640">
    <property type="component" value="Chromosome"/>
</dbReference>
<dbReference type="GO" id="GO:0022625">
    <property type="term" value="C:cytosolic large ribosomal subunit"/>
    <property type="evidence" value="ECO:0007669"/>
    <property type="project" value="TreeGrafter"/>
</dbReference>
<dbReference type="GO" id="GO:0019843">
    <property type="term" value="F:rRNA binding"/>
    <property type="evidence" value="ECO:0007669"/>
    <property type="project" value="UniProtKB-UniRule"/>
</dbReference>
<dbReference type="GO" id="GO:0003735">
    <property type="term" value="F:structural constituent of ribosome"/>
    <property type="evidence" value="ECO:0007669"/>
    <property type="project" value="InterPro"/>
</dbReference>
<dbReference type="GO" id="GO:0000049">
    <property type="term" value="F:tRNA binding"/>
    <property type="evidence" value="ECO:0007669"/>
    <property type="project" value="UniProtKB-KW"/>
</dbReference>
<dbReference type="GO" id="GO:0006412">
    <property type="term" value="P:translation"/>
    <property type="evidence" value="ECO:0007669"/>
    <property type="project" value="UniProtKB-UniRule"/>
</dbReference>
<dbReference type="CDD" id="cd01433">
    <property type="entry name" value="Ribosomal_L16_L10e"/>
    <property type="match status" value="1"/>
</dbReference>
<dbReference type="FunFam" id="3.90.1170.10:FF:000001">
    <property type="entry name" value="50S ribosomal protein L16"/>
    <property type="match status" value="1"/>
</dbReference>
<dbReference type="Gene3D" id="3.90.1170.10">
    <property type="entry name" value="Ribosomal protein L10e/L16"/>
    <property type="match status" value="1"/>
</dbReference>
<dbReference type="HAMAP" id="MF_01342">
    <property type="entry name" value="Ribosomal_uL16"/>
    <property type="match status" value="1"/>
</dbReference>
<dbReference type="InterPro" id="IPR047873">
    <property type="entry name" value="Ribosomal_uL16"/>
</dbReference>
<dbReference type="InterPro" id="IPR000114">
    <property type="entry name" value="Ribosomal_uL16_bact-type"/>
</dbReference>
<dbReference type="InterPro" id="IPR020798">
    <property type="entry name" value="Ribosomal_uL16_CS"/>
</dbReference>
<dbReference type="InterPro" id="IPR016180">
    <property type="entry name" value="Ribosomal_uL16_dom"/>
</dbReference>
<dbReference type="InterPro" id="IPR036920">
    <property type="entry name" value="Ribosomal_uL16_sf"/>
</dbReference>
<dbReference type="NCBIfam" id="TIGR01164">
    <property type="entry name" value="rplP_bact"/>
    <property type="match status" value="1"/>
</dbReference>
<dbReference type="PANTHER" id="PTHR12220">
    <property type="entry name" value="50S/60S RIBOSOMAL PROTEIN L16"/>
    <property type="match status" value="1"/>
</dbReference>
<dbReference type="PANTHER" id="PTHR12220:SF13">
    <property type="entry name" value="LARGE RIBOSOMAL SUBUNIT PROTEIN UL16M"/>
    <property type="match status" value="1"/>
</dbReference>
<dbReference type="Pfam" id="PF00252">
    <property type="entry name" value="Ribosomal_L16"/>
    <property type="match status" value="1"/>
</dbReference>
<dbReference type="PRINTS" id="PR00060">
    <property type="entry name" value="RIBOSOMALL16"/>
</dbReference>
<dbReference type="SUPFAM" id="SSF54686">
    <property type="entry name" value="Ribosomal protein L16p/L10e"/>
    <property type="match status" value="1"/>
</dbReference>
<dbReference type="PROSITE" id="PS00586">
    <property type="entry name" value="RIBOSOMAL_L16_1"/>
    <property type="match status" value="1"/>
</dbReference>
<dbReference type="PROSITE" id="PS00701">
    <property type="entry name" value="RIBOSOMAL_L16_2"/>
    <property type="match status" value="1"/>
</dbReference>
<comment type="function">
    <text evidence="1">Binds 23S rRNA and is also seen to make contacts with the A and possibly P site tRNAs.</text>
</comment>
<comment type="subunit">
    <text evidence="1">Part of the 50S ribosomal subunit.</text>
</comment>
<comment type="similarity">
    <text evidence="1">Belongs to the universal ribosomal protein uL16 family.</text>
</comment>
<sequence length="139" mass="15920">MLMPRRVKHRKQHHPTRRGAAKGGTRLAFGDFGIQAVEAHYVTNRQIESARIAMTRHIKRGGKVWINIYPDRPLTKKPAETRMGSGKGSPEWWIANVKPGRVMFELSGVDETVAREAMRRAMHKLPMKCRFISREAGEF</sequence>
<proteinExistence type="inferred from homology"/>
<accession>A1SNL1</accession>
<feature type="chain" id="PRO_1000054664" description="Large ribosomal subunit protein uL16">
    <location>
        <begin position="1"/>
        <end position="139"/>
    </location>
</feature>
<feature type="region of interest" description="Disordered" evidence="2">
    <location>
        <begin position="1"/>
        <end position="24"/>
    </location>
</feature>
<feature type="compositionally biased region" description="Basic residues" evidence="2">
    <location>
        <begin position="1"/>
        <end position="20"/>
    </location>
</feature>
<evidence type="ECO:0000255" key="1">
    <source>
        <dbReference type="HAMAP-Rule" id="MF_01342"/>
    </source>
</evidence>
<evidence type="ECO:0000256" key="2">
    <source>
        <dbReference type="SAM" id="MobiDB-lite"/>
    </source>
</evidence>
<evidence type="ECO:0000305" key="3"/>
<reference key="1">
    <citation type="submission" date="2006-12" db="EMBL/GenBank/DDBJ databases">
        <title>Complete sequence of chromosome 1 of Nocardioides sp. JS614.</title>
        <authorList>
            <person name="Copeland A."/>
            <person name="Lucas S."/>
            <person name="Lapidus A."/>
            <person name="Barry K."/>
            <person name="Detter J.C."/>
            <person name="Glavina del Rio T."/>
            <person name="Hammon N."/>
            <person name="Israni S."/>
            <person name="Dalin E."/>
            <person name="Tice H."/>
            <person name="Pitluck S."/>
            <person name="Thompson L.S."/>
            <person name="Brettin T."/>
            <person name="Bruce D."/>
            <person name="Han C."/>
            <person name="Tapia R."/>
            <person name="Schmutz J."/>
            <person name="Larimer F."/>
            <person name="Land M."/>
            <person name="Hauser L."/>
            <person name="Kyrpides N."/>
            <person name="Kim E."/>
            <person name="Mattes T."/>
            <person name="Gossett J."/>
            <person name="Richardson P."/>
        </authorList>
    </citation>
    <scope>NUCLEOTIDE SEQUENCE [LARGE SCALE GENOMIC DNA]</scope>
    <source>
        <strain>ATCC BAA-499 / JS614</strain>
    </source>
</reference>
<name>RL16_NOCSJ</name>
<gene>
    <name evidence="1" type="primary">rplP</name>
    <name type="ordered locus">Noca_3898</name>
</gene>